<accession>Q03SA1</accession>
<sequence length="435" mass="48672">MAYPVVAIVGRPNVGKSTLFNRIAGERISIVEDTPGVTRDRIYSRAEWLGTEFRMIDTGGIDMGDEPFLTQITQQAEIAIDEADVIVFIVSAPEGITDADEKVAKILYRADKPVILAVNKADNPEVRESIYDFYSLGFGDPYPVSGVHGLGLGDLLDAVVKEFPEKDGAPKDDSIRFSLIGRPNVGKSSLVNAMLGEERVIVSNIAGTTRDAIDTKFVADDTKFTMVDTAGIRKRGKVYENTERYSVMRAMRAIDDSDVVLVVLNAEEGIREQDKRVAGYAHEAGRGIIILVNKWDTLKKDNHTLTDFQNLIRIEFQYLSYAPIIFVSAKTGQRLEQLPEMIKRVADNHNKRVQSATLNDVVMDAIALNPTPSDNGKRLRVYYATQVAIAPPTFVVFVNDPKMMHFSYERFLENQIREHFDFEGTPIHLIERARK</sequence>
<proteinExistence type="inferred from homology"/>
<comment type="function">
    <text evidence="1">GTPase that plays an essential role in the late steps of ribosome biogenesis.</text>
</comment>
<comment type="subunit">
    <text evidence="1">Associates with the 50S ribosomal subunit.</text>
</comment>
<comment type="similarity">
    <text evidence="1">Belongs to the TRAFAC class TrmE-Era-EngA-EngB-Septin-like GTPase superfamily. EngA (Der) GTPase family.</text>
</comment>
<keyword id="KW-0342">GTP-binding</keyword>
<keyword id="KW-0547">Nucleotide-binding</keyword>
<keyword id="KW-1185">Reference proteome</keyword>
<keyword id="KW-0677">Repeat</keyword>
<keyword id="KW-0690">Ribosome biogenesis</keyword>
<feature type="chain" id="PRO_1000011645" description="GTPase Der">
    <location>
        <begin position="1"/>
        <end position="435"/>
    </location>
</feature>
<feature type="domain" description="EngA-type G 1">
    <location>
        <begin position="4"/>
        <end position="167"/>
    </location>
</feature>
<feature type="domain" description="EngA-type G 2">
    <location>
        <begin position="175"/>
        <end position="350"/>
    </location>
</feature>
<feature type="domain" description="KH-like" evidence="1">
    <location>
        <begin position="351"/>
        <end position="435"/>
    </location>
</feature>
<feature type="binding site" evidence="1">
    <location>
        <begin position="10"/>
        <end position="17"/>
    </location>
    <ligand>
        <name>GTP</name>
        <dbReference type="ChEBI" id="CHEBI:37565"/>
        <label>1</label>
    </ligand>
</feature>
<feature type="binding site" evidence="1">
    <location>
        <begin position="57"/>
        <end position="61"/>
    </location>
    <ligand>
        <name>GTP</name>
        <dbReference type="ChEBI" id="CHEBI:37565"/>
        <label>1</label>
    </ligand>
</feature>
<feature type="binding site" evidence="1">
    <location>
        <begin position="119"/>
        <end position="122"/>
    </location>
    <ligand>
        <name>GTP</name>
        <dbReference type="ChEBI" id="CHEBI:37565"/>
        <label>1</label>
    </ligand>
</feature>
<feature type="binding site" evidence="1">
    <location>
        <begin position="181"/>
        <end position="188"/>
    </location>
    <ligand>
        <name>GTP</name>
        <dbReference type="ChEBI" id="CHEBI:37565"/>
        <label>2</label>
    </ligand>
</feature>
<feature type="binding site" evidence="1">
    <location>
        <begin position="228"/>
        <end position="232"/>
    </location>
    <ligand>
        <name>GTP</name>
        <dbReference type="ChEBI" id="CHEBI:37565"/>
        <label>2</label>
    </ligand>
</feature>
<feature type="binding site" evidence="1">
    <location>
        <begin position="293"/>
        <end position="296"/>
    </location>
    <ligand>
        <name>GTP</name>
        <dbReference type="ChEBI" id="CHEBI:37565"/>
        <label>2</label>
    </ligand>
</feature>
<organism>
    <name type="scientific">Levilactobacillus brevis (strain ATCC 367 / BCRC 12310 / CIP 105137 / JCM 1170 / LMG 11437 / NCIMB 947 / NCTC 947)</name>
    <name type="common">Lactobacillus brevis</name>
    <dbReference type="NCBI Taxonomy" id="387344"/>
    <lineage>
        <taxon>Bacteria</taxon>
        <taxon>Bacillati</taxon>
        <taxon>Bacillota</taxon>
        <taxon>Bacilli</taxon>
        <taxon>Lactobacillales</taxon>
        <taxon>Lactobacillaceae</taxon>
        <taxon>Levilactobacillus</taxon>
    </lineage>
</organism>
<evidence type="ECO:0000255" key="1">
    <source>
        <dbReference type="HAMAP-Rule" id="MF_00195"/>
    </source>
</evidence>
<dbReference type="EMBL" id="CP000416">
    <property type="protein sequence ID" value="ABJ63921.1"/>
    <property type="molecule type" value="Genomic_DNA"/>
</dbReference>
<dbReference type="RefSeq" id="WP_011667552.1">
    <property type="nucleotide sequence ID" value="NC_008497.1"/>
</dbReference>
<dbReference type="SMR" id="Q03SA1"/>
<dbReference type="STRING" id="387344.LVIS_0778"/>
<dbReference type="GeneID" id="56993031"/>
<dbReference type="KEGG" id="lbr:LVIS_0778"/>
<dbReference type="PATRIC" id="fig|387344.15.peg.752"/>
<dbReference type="eggNOG" id="COG1160">
    <property type="taxonomic scope" value="Bacteria"/>
</dbReference>
<dbReference type="HOGENOM" id="CLU_016077_6_2_9"/>
<dbReference type="Proteomes" id="UP000001652">
    <property type="component" value="Chromosome"/>
</dbReference>
<dbReference type="GO" id="GO:0005525">
    <property type="term" value="F:GTP binding"/>
    <property type="evidence" value="ECO:0007669"/>
    <property type="project" value="UniProtKB-UniRule"/>
</dbReference>
<dbReference type="GO" id="GO:0043022">
    <property type="term" value="F:ribosome binding"/>
    <property type="evidence" value="ECO:0007669"/>
    <property type="project" value="TreeGrafter"/>
</dbReference>
<dbReference type="GO" id="GO:0042254">
    <property type="term" value="P:ribosome biogenesis"/>
    <property type="evidence" value="ECO:0007669"/>
    <property type="project" value="UniProtKB-KW"/>
</dbReference>
<dbReference type="CDD" id="cd01894">
    <property type="entry name" value="EngA1"/>
    <property type="match status" value="1"/>
</dbReference>
<dbReference type="CDD" id="cd01895">
    <property type="entry name" value="EngA2"/>
    <property type="match status" value="1"/>
</dbReference>
<dbReference type="FunFam" id="3.30.300.20:FF:000004">
    <property type="entry name" value="GTPase Der"/>
    <property type="match status" value="1"/>
</dbReference>
<dbReference type="FunFam" id="3.40.50.300:FF:000040">
    <property type="entry name" value="GTPase Der"/>
    <property type="match status" value="1"/>
</dbReference>
<dbReference type="FunFam" id="3.40.50.300:FF:000057">
    <property type="entry name" value="GTPase Der"/>
    <property type="match status" value="1"/>
</dbReference>
<dbReference type="Gene3D" id="3.30.300.20">
    <property type="match status" value="1"/>
</dbReference>
<dbReference type="Gene3D" id="3.40.50.300">
    <property type="entry name" value="P-loop containing nucleotide triphosphate hydrolases"/>
    <property type="match status" value="2"/>
</dbReference>
<dbReference type="HAMAP" id="MF_00195">
    <property type="entry name" value="GTPase_Der"/>
    <property type="match status" value="1"/>
</dbReference>
<dbReference type="InterPro" id="IPR031166">
    <property type="entry name" value="G_ENGA"/>
</dbReference>
<dbReference type="InterPro" id="IPR006073">
    <property type="entry name" value="GTP-bd"/>
</dbReference>
<dbReference type="InterPro" id="IPR016484">
    <property type="entry name" value="GTPase_Der"/>
</dbReference>
<dbReference type="InterPro" id="IPR032859">
    <property type="entry name" value="KH_dom-like"/>
</dbReference>
<dbReference type="InterPro" id="IPR015946">
    <property type="entry name" value="KH_dom-like_a/b"/>
</dbReference>
<dbReference type="InterPro" id="IPR027417">
    <property type="entry name" value="P-loop_NTPase"/>
</dbReference>
<dbReference type="InterPro" id="IPR005225">
    <property type="entry name" value="Small_GTP-bd"/>
</dbReference>
<dbReference type="NCBIfam" id="TIGR03594">
    <property type="entry name" value="GTPase_EngA"/>
    <property type="match status" value="1"/>
</dbReference>
<dbReference type="NCBIfam" id="TIGR00231">
    <property type="entry name" value="small_GTP"/>
    <property type="match status" value="2"/>
</dbReference>
<dbReference type="PANTHER" id="PTHR43834">
    <property type="entry name" value="GTPASE DER"/>
    <property type="match status" value="1"/>
</dbReference>
<dbReference type="PANTHER" id="PTHR43834:SF6">
    <property type="entry name" value="GTPASE DER"/>
    <property type="match status" value="1"/>
</dbReference>
<dbReference type="Pfam" id="PF14714">
    <property type="entry name" value="KH_dom-like"/>
    <property type="match status" value="1"/>
</dbReference>
<dbReference type="Pfam" id="PF01926">
    <property type="entry name" value="MMR_HSR1"/>
    <property type="match status" value="2"/>
</dbReference>
<dbReference type="PIRSF" id="PIRSF006485">
    <property type="entry name" value="GTP-binding_EngA"/>
    <property type="match status" value="1"/>
</dbReference>
<dbReference type="SUPFAM" id="SSF52540">
    <property type="entry name" value="P-loop containing nucleoside triphosphate hydrolases"/>
    <property type="match status" value="2"/>
</dbReference>
<dbReference type="PROSITE" id="PS51712">
    <property type="entry name" value="G_ENGA"/>
    <property type="match status" value="2"/>
</dbReference>
<gene>
    <name evidence="1" type="primary">der</name>
    <name type="synonym">engA</name>
    <name type="ordered locus">LVIS_0778</name>
</gene>
<name>DER_LEVBA</name>
<protein>
    <recommendedName>
        <fullName evidence="1">GTPase Der</fullName>
    </recommendedName>
    <alternativeName>
        <fullName evidence="1">GTP-binding protein EngA</fullName>
    </alternativeName>
</protein>
<reference key="1">
    <citation type="journal article" date="2006" name="Proc. Natl. Acad. Sci. U.S.A.">
        <title>Comparative genomics of the lactic acid bacteria.</title>
        <authorList>
            <person name="Makarova K.S."/>
            <person name="Slesarev A."/>
            <person name="Wolf Y.I."/>
            <person name="Sorokin A."/>
            <person name="Mirkin B."/>
            <person name="Koonin E.V."/>
            <person name="Pavlov A."/>
            <person name="Pavlova N."/>
            <person name="Karamychev V."/>
            <person name="Polouchine N."/>
            <person name="Shakhova V."/>
            <person name="Grigoriev I."/>
            <person name="Lou Y."/>
            <person name="Rohksar D."/>
            <person name="Lucas S."/>
            <person name="Huang K."/>
            <person name="Goodstein D.M."/>
            <person name="Hawkins T."/>
            <person name="Plengvidhya V."/>
            <person name="Welker D."/>
            <person name="Hughes J."/>
            <person name="Goh Y."/>
            <person name="Benson A."/>
            <person name="Baldwin K."/>
            <person name="Lee J.-H."/>
            <person name="Diaz-Muniz I."/>
            <person name="Dosti B."/>
            <person name="Smeianov V."/>
            <person name="Wechter W."/>
            <person name="Barabote R."/>
            <person name="Lorca G."/>
            <person name="Altermann E."/>
            <person name="Barrangou R."/>
            <person name="Ganesan B."/>
            <person name="Xie Y."/>
            <person name="Rawsthorne H."/>
            <person name="Tamir D."/>
            <person name="Parker C."/>
            <person name="Breidt F."/>
            <person name="Broadbent J.R."/>
            <person name="Hutkins R."/>
            <person name="O'Sullivan D."/>
            <person name="Steele J."/>
            <person name="Unlu G."/>
            <person name="Saier M.H. Jr."/>
            <person name="Klaenhammer T."/>
            <person name="Richardson P."/>
            <person name="Kozyavkin S."/>
            <person name="Weimer B.C."/>
            <person name="Mills D.A."/>
        </authorList>
    </citation>
    <scope>NUCLEOTIDE SEQUENCE [LARGE SCALE GENOMIC DNA]</scope>
    <source>
        <strain>ATCC 367 / BCRC 12310 / CIP 105137 / JCM 1170 / LMG 11437 / NCIMB 947 / NCTC 947</strain>
    </source>
</reference>